<protein>
    <recommendedName>
        <fullName evidence="1">GMP synthase [glutamine-hydrolyzing]</fullName>
        <ecNumber evidence="1">6.3.5.2</ecNumber>
    </recommendedName>
    <alternativeName>
        <fullName evidence="1">GMP synthetase</fullName>
    </alternativeName>
    <alternativeName>
        <fullName evidence="1">Glutamine amidotransferase</fullName>
    </alternativeName>
</protein>
<reference key="1">
    <citation type="journal article" date="2006" name="Proc. Natl. Acad. Sci. U.S.A.">
        <title>Comparative genomics of the lactic acid bacteria.</title>
        <authorList>
            <person name="Makarova K.S."/>
            <person name="Slesarev A."/>
            <person name="Wolf Y.I."/>
            <person name="Sorokin A."/>
            <person name="Mirkin B."/>
            <person name="Koonin E.V."/>
            <person name="Pavlov A."/>
            <person name="Pavlova N."/>
            <person name="Karamychev V."/>
            <person name="Polouchine N."/>
            <person name="Shakhova V."/>
            <person name="Grigoriev I."/>
            <person name="Lou Y."/>
            <person name="Rohksar D."/>
            <person name="Lucas S."/>
            <person name="Huang K."/>
            <person name="Goodstein D.M."/>
            <person name="Hawkins T."/>
            <person name="Plengvidhya V."/>
            <person name="Welker D."/>
            <person name="Hughes J."/>
            <person name="Goh Y."/>
            <person name="Benson A."/>
            <person name="Baldwin K."/>
            <person name="Lee J.-H."/>
            <person name="Diaz-Muniz I."/>
            <person name="Dosti B."/>
            <person name="Smeianov V."/>
            <person name="Wechter W."/>
            <person name="Barabote R."/>
            <person name="Lorca G."/>
            <person name="Altermann E."/>
            <person name="Barrangou R."/>
            <person name="Ganesan B."/>
            <person name="Xie Y."/>
            <person name="Rawsthorne H."/>
            <person name="Tamir D."/>
            <person name="Parker C."/>
            <person name="Breidt F."/>
            <person name="Broadbent J.R."/>
            <person name="Hutkins R."/>
            <person name="O'Sullivan D."/>
            <person name="Steele J."/>
            <person name="Unlu G."/>
            <person name="Saier M.H. Jr."/>
            <person name="Klaenhammer T."/>
            <person name="Richardson P."/>
            <person name="Kozyavkin S."/>
            <person name="Weimer B.C."/>
            <person name="Mills D.A."/>
        </authorList>
    </citation>
    <scope>NUCLEOTIDE SEQUENCE [LARGE SCALE GENOMIC DNA]</scope>
    <source>
        <strain>ATCC 33323 / DSM 20243 / BCRC 14619 / CIP 102991 / JCM 1131 / KCTC 3163 / NCIMB 11718 / NCTC 13722 / AM63</strain>
    </source>
</reference>
<keyword id="KW-0067">ATP-binding</keyword>
<keyword id="KW-0315">Glutamine amidotransferase</keyword>
<keyword id="KW-0332">GMP biosynthesis</keyword>
<keyword id="KW-0436">Ligase</keyword>
<keyword id="KW-0547">Nucleotide-binding</keyword>
<keyword id="KW-0658">Purine biosynthesis</keyword>
<dbReference type="EC" id="6.3.5.2" evidence="1"/>
<dbReference type="EMBL" id="CP000413">
    <property type="protein sequence ID" value="ABJ59640.1"/>
    <property type="molecule type" value="Genomic_DNA"/>
</dbReference>
<dbReference type="RefSeq" id="WP_003650766.1">
    <property type="nucleotide sequence ID" value="NZ_WBMG01000001.1"/>
</dbReference>
<dbReference type="SMR" id="Q046I2"/>
<dbReference type="GeneID" id="29640020"/>
<dbReference type="KEGG" id="lga:LGAS_0231"/>
<dbReference type="HOGENOM" id="CLU_014340_0_5_9"/>
<dbReference type="BioCyc" id="LGAS324831:G1G6Y-228-MONOMER"/>
<dbReference type="UniPathway" id="UPA00189">
    <property type="reaction ID" value="UER00296"/>
</dbReference>
<dbReference type="Proteomes" id="UP000000664">
    <property type="component" value="Chromosome"/>
</dbReference>
<dbReference type="GO" id="GO:0005829">
    <property type="term" value="C:cytosol"/>
    <property type="evidence" value="ECO:0007669"/>
    <property type="project" value="TreeGrafter"/>
</dbReference>
<dbReference type="GO" id="GO:0005524">
    <property type="term" value="F:ATP binding"/>
    <property type="evidence" value="ECO:0007669"/>
    <property type="project" value="UniProtKB-UniRule"/>
</dbReference>
<dbReference type="GO" id="GO:0003921">
    <property type="term" value="F:GMP synthase activity"/>
    <property type="evidence" value="ECO:0007669"/>
    <property type="project" value="InterPro"/>
</dbReference>
<dbReference type="CDD" id="cd01742">
    <property type="entry name" value="GATase1_GMP_Synthase"/>
    <property type="match status" value="1"/>
</dbReference>
<dbReference type="CDD" id="cd01997">
    <property type="entry name" value="GMP_synthase_C"/>
    <property type="match status" value="1"/>
</dbReference>
<dbReference type="FunFam" id="3.30.300.10:FF:000002">
    <property type="entry name" value="GMP synthase [glutamine-hydrolyzing]"/>
    <property type="match status" value="1"/>
</dbReference>
<dbReference type="FunFam" id="3.40.50.620:FF:000001">
    <property type="entry name" value="GMP synthase [glutamine-hydrolyzing]"/>
    <property type="match status" value="1"/>
</dbReference>
<dbReference type="FunFam" id="3.40.50.880:FF:000001">
    <property type="entry name" value="GMP synthase [glutamine-hydrolyzing]"/>
    <property type="match status" value="1"/>
</dbReference>
<dbReference type="Gene3D" id="3.30.300.10">
    <property type="match status" value="1"/>
</dbReference>
<dbReference type="Gene3D" id="3.40.50.880">
    <property type="match status" value="1"/>
</dbReference>
<dbReference type="Gene3D" id="3.40.50.620">
    <property type="entry name" value="HUPs"/>
    <property type="match status" value="1"/>
</dbReference>
<dbReference type="HAMAP" id="MF_00344">
    <property type="entry name" value="GMP_synthase"/>
    <property type="match status" value="1"/>
</dbReference>
<dbReference type="InterPro" id="IPR029062">
    <property type="entry name" value="Class_I_gatase-like"/>
</dbReference>
<dbReference type="InterPro" id="IPR017926">
    <property type="entry name" value="GATASE"/>
</dbReference>
<dbReference type="InterPro" id="IPR001674">
    <property type="entry name" value="GMP_synth_C"/>
</dbReference>
<dbReference type="InterPro" id="IPR004739">
    <property type="entry name" value="GMP_synth_GATase"/>
</dbReference>
<dbReference type="InterPro" id="IPR022955">
    <property type="entry name" value="GMP_synthase"/>
</dbReference>
<dbReference type="InterPro" id="IPR025777">
    <property type="entry name" value="GMPS_ATP_PPase_dom"/>
</dbReference>
<dbReference type="InterPro" id="IPR022310">
    <property type="entry name" value="NAD/GMP_synthase"/>
</dbReference>
<dbReference type="InterPro" id="IPR014729">
    <property type="entry name" value="Rossmann-like_a/b/a_fold"/>
</dbReference>
<dbReference type="NCBIfam" id="TIGR00884">
    <property type="entry name" value="guaA_Cterm"/>
    <property type="match status" value="1"/>
</dbReference>
<dbReference type="NCBIfam" id="TIGR00888">
    <property type="entry name" value="guaA_Nterm"/>
    <property type="match status" value="1"/>
</dbReference>
<dbReference type="NCBIfam" id="NF000848">
    <property type="entry name" value="PRK00074.1"/>
    <property type="match status" value="1"/>
</dbReference>
<dbReference type="PANTHER" id="PTHR11922:SF2">
    <property type="entry name" value="GMP SYNTHASE [GLUTAMINE-HYDROLYZING]"/>
    <property type="match status" value="1"/>
</dbReference>
<dbReference type="PANTHER" id="PTHR11922">
    <property type="entry name" value="GMP SYNTHASE-RELATED"/>
    <property type="match status" value="1"/>
</dbReference>
<dbReference type="Pfam" id="PF00117">
    <property type="entry name" value="GATase"/>
    <property type="match status" value="1"/>
</dbReference>
<dbReference type="Pfam" id="PF00958">
    <property type="entry name" value="GMP_synt_C"/>
    <property type="match status" value="1"/>
</dbReference>
<dbReference type="Pfam" id="PF02540">
    <property type="entry name" value="NAD_synthase"/>
    <property type="match status" value="1"/>
</dbReference>
<dbReference type="PRINTS" id="PR00099">
    <property type="entry name" value="CPSGATASE"/>
</dbReference>
<dbReference type="PRINTS" id="PR00096">
    <property type="entry name" value="GATASE"/>
</dbReference>
<dbReference type="SUPFAM" id="SSF52402">
    <property type="entry name" value="Adenine nucleotide alpha hydrolases-like"/>
    <property type="match status" value="1"/>
</dbReference>
<dbReference type="SUPFAM" id="SSF52317">
    <property type="entry name" value="Class I glutamine amidotransferase-like"/>
    <property type="match status" value="1"/>
</dbReference>
<dbReference type="PROSITE" id="PS51273">
    <property type="entry name" value="GATASE_TYPE_1"/>
    <property type="match status" value="1"/>
</dbReference>
<dbReference type="PROSITE" id="PS51553">
    <property type="entry name" value="GMPS_ATP_PPASE"/>
    <property type="match status" value="1"/>
</dbReference>
<comment type="function">
    <text evidence="1">Catalyzes the synthesis of GMP from XMP.</text>
</comment>
<comment type="catalytic activity">
    <reaction evidence="1">
        <text>XMP + L-glutamine + ATP + H2O = GMP + L-glutamate + AMP + diphosphate + 2 H(+)</text>
        <dbReference type="Rhea" id="RHEA:11680"/>
        <dbReference type="ChEBI" id="CHEBI:15377"/>
        <dbReference type="ChEBI" id="CHEBI:15378"/>
        <dbReference type="ChEBI" id="CHEBI:29985"/>
        <dbReference type="ChEBI" id="CHEBI:30616"/>
        <dbReference type="ChEBI" id="CHEBI:33019"/>
        <dbReference type="ChEBI" id="CHEBI:57464"/>
        <dbReference type="ChEBI" id="CHEBI:58115"/>
        <dbReference type="ChEBI" id="CHEBI:58359"/>
        <dbReference type="ChEBI" id="CHEBI:456215"/>
        <dbReference type="EC" id="6.3.5.2"/>
    </reaction>
</comment>
<comment type="pathway">
    <text evidence="1">Purine metabolism; GMP biosynthesis; GMP from XMP (L-Gln route): step 1/1.</text>
</comment>
<comment type="subunit">
    <text evidence="1">Homodimer.</text>
</comment>
<gene>
    <name evidence="1" type="primary">guaA</name>
    <name type="ordered locus">LGAS_0231</name>
</gene>
<sequence length="517" mass="58004">MAKTNLNDFDKIIVLDFGSQYNQLITRRIRDFGIYSELLPHDLSIEKIKKMAPKGIIFSGGPNSVYDEGALKVDPEIFKLGIPILGICYGMQLMSYDLGGKVEKADNSEYGRADIEVTDPNAVLFEGLPKEQYVWMSHGDLVTKAPEGFKVTAKSKNCPISAIANDEKKFYGIQFHAEVRNSEYGLDILKNFAFNVCDAKANWTMDDFIEMQVDEIREKVGDKKVILGLSGGVDSSVTATLLHKAIGDQLTAIFVDHGMLRKDEGDQVMQALNKDLGVNIIRVNAQKRFLDKLKGVTDPEQKRKIIGKEFIEVFNEEAKKLKDVDFLAQGTLYTDVIESGTNTAQTIKSHHNVGGLPEDMHFELIEPLRKLFKDEVRELGEKLGIPHDLVWRQPFPGPGLAIRVLGEVTEDKLKIVRESDAILRDEIKKAGLQEDIWQYFTVLPGIRSVGVMGDGRTYDYTIGIRAVTSIDGMTADFAKLPWDVLSKISTRIVDECDHINRVVYDITSKPPSTIEWE</sequence>
<name>GUAA_LACGA</name>
<proteinExistence type="inferred from homology"/>
<evidence type="ECO:0000255" key="1">
    <source>
        <dbReference type="HAMAP-Rule" id="MF_00344"/>
    </source>
</evidence>
<accession>Q046I2</accession>
<organism>
    <name type="scientific">Lactobacillus gasseri (strain ATCC 33323 / DSM 20243 / BCRC 14619 / CIP 102991 / JCM 1131 / KCTC 3163 / NCIMB 11718 / NCTC 13722 / AM63)</name>
    <dbReference type="NCBI Taxonomy" id="324831"/>
    <lineage>
        <taxon>Bacteria</taxon>
        <taxon>Bacillati</taxon>
        <taxon>Bacillota</taxon>
        <taxon>Bacilli</taxon>
        <taxon>Lactobacillales</taxon>
        <taxon>Lactobacillaceae</taxon>
        <taxon>Lactobacillus</taxon>
    </lineage>
</organism>
<feature type="chain" id="PRO_1000120328" description="GMP synthase [glutamine-hydrolyzing]">
    <location>
        <begin position="1"/>
        <end position="517"/>
    </location>
</feature>
<feature type="domain" description="Glutamine amidotransferase type-1" evidence="1">
    <location>
        <begin position="11"/>
        <end position="202"/>
    </location>
</feature>
<feature type="domain" description="GMPS ATP-PPase" evidence="1">
    <location>
        <begin position="203"/>
        <end position="392"/>
    </location>
</feature>
<feature type="active site" description="Nucleophile" evidence="1">
    <location>
        <position position="88"/>
    </location>
</feature>
<feature type="active site" evidence="1">
    <location>
        <position position="176"/>
    </location>
</feature>
<feature type="active site" evidence="1">
    <location>
        <position position="178"/>
    </location>
</feature>
<feature type="binding site" evidence="1">
    <location>
        <begin position="230"/>
        <end position="236"/>
    </location>
    <ligand>
        <name>ATP</name>
        <dbReference type="ChEBI" id="CHEBI:30616"/>
    </ligand>
</feature>